<comment type="function">
    <text evidence="1 2 6 9">Subunit F6, of the mitochondrial membrane ATP synthase complex (F(1)F(0) ATP synthase or Complex V) that produces ATP from ADP in the presence of a proton gradient across the membrane which is generated by electron transport complexes of the respiratory chain (PubMed:37244256). ATP synthase complex consist of a soluble F(1) head domain - the catalytic core - and a membrane F(1) domain - the membrane proton channel (PubMed:37244256). These two domains are linked by a central stalk rotating inside the F(1) region and a stationary peripheral stalk (PubMed:37244256). During catalysis, ATP synthesis in the catalytic domain of F(1) is coupled via a rotary mechanism of the central stalk subunits to proton translocation (Probable). In vivo, can only synthesize ATP although its ATP hydrolase activity can be activated artificially in vitro (By similarity). Part of the complex F(0) domain (PubMed:37244256). Part of the complex F(0) domain and the peripheric stalk, which acts as a stator to hold the catalytic alpha(3)beta(3) subcomplex and subunit a/ATP6 static relative to the rotary elements (By similarity).</text>
</comment>
<comment type="subunit">
    <text evidence="6">Component of the ATP synthase complex composed at least of ATP5F1A/subunit alpha, ATP5F1B/subunit beta, ATP5MC1/subunit c (homooctomer), MT-ATP6/subunit a, MT-ATP8/subunit 8, ATP5ME/subunit e, ATP5MF/subunit f, ATP5MG/subunit g, ATP5MK/subunit k, ATP5MJ/subunit j, ATP5F1C/subunit gamma, ATP5F1D/subunit delta, ATP5F1E/subunit epsilon, ATP5PF/subunit F6, ATP5PB/subunit b, ATP5PD/subunit d, ATP5PO/subunit OSCP (PubMed:37244256). ATP synthase complex consists of a soluble F(1) head domain (subunits alpha(3) and beta(3)) - the catalytic core - and a membrane F(0) domain - the membrane proton channel (subunits c, a, 8, e, f, g, k and j) (PubMed:37244256). These two domains are linked by a central stalk (subunits gamma, delta, and epsilon) rotating inside the F1 region and a stationary peripheral stalk (subunits F6, b, d, and OSCP) (PubMed:37244256).</text>
</comment>
<comment type="interaction">
    <interactant intactId="EBI-2606700">
        <id>P18859</id>
    </interactant>
    <interactant intactId="EBI-348517">
        <id>O95870</id>
        <label>ABHD16A</label>
    </interactant>
    <organismsDiffer>false</organismsDiffer>
    <experiments>3</experiments>
</comment>
<comment type="interaction">
    <interactant intactId="EBI-2606700">
        <id>P18859</id>
    </interactant>
    <interactant intactId="EBI-351437">
        <id>P25705</id>
        <label>ATP5F1A</label>
    </interactant>
    <organismsDiffer>false</organismsDiffer>
    <experiments>6</experiments>
</comment>
<comment type="interaction">
    <interactant intactId="EBI-2606700">
        <id>P18859</id>
    </interactant>
    <interactant intactId="EBI-724024">
        <id>O75947</id>
        <label>ATP5PD</label>
    </interactant>
    <organismsDiffer>false</organismsDiffer>
    <experiments>3</experiments>
</comment>
<comment type="interaction">
    <interactant intactId="EBI-2606700">
        <id>P18859</id>
    </interactant>
    <interactant intactId="EBI-707714">
        <id>Q92843</id>
        <label>BCL2L2</label>
    </interactant>
    <organismsDiffer>false</organismsDiffer>
    <experiments>3</experiments>
</comment>
<comment type="interaction">
    <interactant intactId="EBI-2606700">
        <id>P18859</id>
    </interactant>
    <interactant intactId="EBI-749162">
        <id>Q9BT40</id>
        <label>INPP5K</label>
    </interactant>
    <organismsDiffer>false</organismsDiffer>
    <experiments>3</experiments>
</comment>
<comment type="interaction">
    <interactant intactId="EBI-2606700">
        <id>P18859</id>
    </interactant>
    <interactant intactId="EBI-3934936">
        <id>O95279</id>
        <label>KCNK5</label>
    </interactant>
    <organismsDiffer>false</organismsDiffer>
    <experiments>3</experiments>
</comment>
<comment type="interaction">
    <interactant intactId="EBI-2606700">
        <id>P18859</id>
    </interactant>
    <interactant intactId="EBI-750078">
        <id>Q13021</id>
        <label>MALL</label>
    </interactant>
    <organismsDiffer>false</organismsDiffer>
    <experiments>3</experiments>
</comment>
<comment type="interaction">
    <interactant intactId="EBI-2606700">
        <id>P18859</id>
    </interactant>
    <interactant intactId="EBI-740987">
        <id>Q9NQG6</id>
        <label>MIEF1</label>
    </interactant>
    <organismsDiffer>false</organismsDiffer>
    <experiments>3</experiments>
</comment>
<comment type="interaction">
    <interactant intactId="EBI-2606700">
        <id>P18859</id>
    </interactant>
    <interactant intactId="EBI-11988931">
        <id>Q96C03-3</id>
        <label>MIEF2</label>
    </interactant>
    <organismsDiffer>false</organismsDiffer>
    <experiments>3</experiments>
</comment>
<comment type="interaction">
    <interactant intactId="EBI-2606700">
        <id>P18859</id>
    </interactant>
    <interactant intactId="EBI-12179105">
        <id>O75425</id>
        <label>MOSPD3</label>
    </interactant>
    <organismsDiffer>false</organismsDiffer>
    <experiments>3</experiments>
</comment>
<comment type="interaction">
    <interactant intactId="EBI-2606700">
        <id>P18859</id>
    </interactant>
    <interactant intactId="EBI-11978907">
        <id>Q9ULP0-2</id>
        <label>NDRG4</label>
    </interactant>
    <organismsDiffer>false</organismsDiffer>
    <experiments>3</experiments>
</comment>
<comment type="interaction">
    <interactant intactId="EBI-2606700">
        <id>P18859</id>
    </interactant>
    <interactant intactId="EBI-2861380">
        <id>Q8TCD6</id>
        <label>PHOSPHO2</label>
    </interactant>
    <organismsDiffer>false</organismsDiffer>
    <experiments>5</experiments>
</comment>
<comment type="interaction">
    <interactant intactId="EBI-2606700">
        <id>P18859</id>
    </interactant>
    <interactant intactId="EBI-608347">
        <id>Q04941</id>
        <label>PLP2</label>
    </interactant>
    <organismsDiffer>false</organismsDiffer>
    <experiments>3</experiments>
</comment>
<comment type="interaction">
    <interactant intactId="EBI-2606700">
        <id>P18859</id>
    </interactant>
    <interactant intactId="EBI-742898">
        <id>P43378</id>
        <label>PTPN9</label>
    </interactant>
    <organismsDiffer>false</organismsDiffer>
    <experiments>3</experiments>
</comment>
<comment type="interaction">
    <interactant intactId="EBI-2606700">
        <id>P18859</id>
    </interactant>
    <interactant intactId="EBI-14065960">
        <id>Q96HR9-2</id>
        <label>REEP6</label>
    </interactant>
    <organismsDiffer>false</organismsDiffer>
    <experiments>3</experiments>
</comment>
<comment type="interaction">
    <interactant intactId="EBI-2606700">
        <id>P18859</id>
    </interactant>
    <interactant intactId="EBI-4402330">
        <id>O95562</id>
        <label>SFT2D2</label>
    </interactant>
    <organismsDiffer>false</organismsDiffer>
    <experiments>3</experiments>
</comment>
<comment type="interaction">
    <interactant intactId="EBI-2606700">
        <id>P18859</id>
    </interactant>
    <interactant intactId="EBI-17640454">
        <id>Q96PQ1</id>
        <label>SIGLEC12</label>
    </interactant>
    <organismsDiffer>false</organismsDiffer>
    <experiments>3</experiments>
</comment>
<comment type="subcellular location">
    <subcellularLocation>
        <location>Mitochondrion</location>
    </subcellularLocation>
    <subcellularLocation>
        <location>Mitochondrion inner membrane</location>
    </subcellularLocation>
</comment>
<comment type="alternative products">
    <event type="alternative splicing"/>
    <isoform>
        <id>P18859-1</id>
        <name>1</name>
        <sequence type="displayed"/>
    </isoform>
    <isoform>
        <id>P18859-2</id>
        <name>2</name>
        <sequence type="described" ref="VSP_046187"/>
    </isoform>
</comment>
<comment type="similarity">
    <text evidence="8">Belongs to the eukaryotic ATPase subunit F6 family.</text>
</comment>
<dbReference type="EMBL" id="M37104">
    <property type="protein sequence ID" value="AAA51807.1"/>
    <property type="molecule type" value="mRNA"/>
</dbReference>
<dbReference type="EMBL" id="M73031">
    <property type="protein sequence ID" value="AAA58630.1"/>
    <property type="molecule type" value="mRNA"/>
</dbReference>
<dbReference type="EMBL" id="AL110183">
    <property type="protein sequence ID" value="CAB53667.1"/>
    <property type="molecule type" value="mRNA"/>
</dbReference>
<dbReference type="EMBL" id="BT007244">
    <property type="protein sequence ID" value="AAP35908.1"/>
    <property type="molecule type" value="mRNA"/>
</dbReference>
<dbReference type="EMBL" id="DT217787">
    <property type="status" value="NOT_ANNOTATED_CDS"/>
    <property type="molecule type" value="mRNA"/>
</dbReference>
<dbReference type="EMBL" id="AP001694">
    <property type="status" value="NOT_ANNOTATED_CDS"/>
    <property type="molecule type" value="Genomic_DNA"/>
</dbReference>
<dbReference type="EMBL" id="BC001178">
    <property type="protein sequence ID" value="AAH01178.1"/>
    <property type="molecule type" value="mRNA"/>
</dbReference>
<dbReference type="CCDS" id="CCDS13574.1">
    <molecule id="P18859-1"/>
</dbReference>
<dbReference type="CCDS" id="CCDS46637.1">
    <molecule id="P18859-2"/>
</dbReference>
<dbReference type="PIR" id="JT0563">
    <property type="entry name" value="JT0563"/>
</dbReference>
<dbReference type="RefSeq" id="NP_001003696.1">
    <molecule id="P18859-1"/>
    <property type="nucleotide sequence ID" value="NM_001003696.2"/>
</dbReference>
<dbReference type="RefSeq" id="NP_001003697.1">
    <molecule id="P18859-1"/>
    <property type="nucleotide sequence ID" value="NM_001003697.2"/>
</dbReference>
<dbReference type="RefSeq" id="NP_001003701.1">
    <molecule id="P18859-2"/>
    <property type="nucleotide sequence ID" value="NM_001003701.2"/>
</dbReference>
<dbReference type="RefSeq" id="NP_001003703.1">
    <molecule id="P18859-1"/>
    <property type="nucleotide sequence ID" value="NM_001003703.2"/>
</dbReference>
<dbReference type="RefSeq" id="NP_001307195.1">
    <molecule id="P18859-1"/>
    <property type="nucleotide sequence ID" value="NM_001320266.2"/>
</dbReference>
<dbReference type="RefSeq" id="NP_001307196.1">
    <molecule id="P18859-1"/>
    <property type="nucleotide sequence ID" value="NM_001320267.2"/>
</dbReference>
<dbReference type="RefSeq" id="NP_001676.2">
    <molecule id="P18859-1"/>
    <property type="nucleotide sequence ID" value="NM_001685.4"/>
</dbReference>
<dbReference type="PDB" id="8H9G">
    <property type="method" value="EM"/>
    <property type="resolution" value="2.95 A"/>
    <property type="chains" value="L=1-108"/>
</dbReference>
<dbReference type="PDB" id="8H9K">
    <property type="method" value="EM"/>
    <property type="resolution" value="3.51 A"/>
    <property type="chains" value="L=1-108"/>
</dbReference>
<dbReference type="PDB" id="8H9N">
    <property type="method" value="EM"/>
    <property type="resolution" value="3.56 A"/>
    <property type="chains" value="L=1-108"/>
</dbReference>
<dbReference type="PDB" id="8H9R">
    <property type="method" value="EM"/>
    <property type="resolution" value="3.97 A"/>
    <property type="chains" value="L=1-108"/>
</dbReference>
<dbReference type="PDB" id="8H9S">
    <property type="method" value="EM"/>
    <property type="resolution" value="2.53 A"/>
    <property type="chains" value="L=1-108"/>
</dbReference>
<dbReference type="PDB" id="8H9T">
    <property type="method" value="EM"/>
    <property type="resolution" value="2.77 A"/>
    <property type="chains" value="L=1-108"/>
</dbReference>
<dbReference type="PDB" id="8H9U">
    <property type="method" value="EM"/>
    <property type="resolution" value="2.61 A"/>
    <property type="chains" value="L=1-108"/>
</dbReference>
<dbReference type="PDB" id="8H9V">
    <property type="method" value="EM"/>
    <property type="resolution" value="3.02 A"/>
    <property type="chains" value="L=1-108"/>
</dbReference>
<dbReference type="PDB" id="8KI3">
    <property type="method" value="EM"/>
    <property type="resolution" value="2.89 A"/>
    <property type="chains" value="L=1-108"/>
</dbReference>
<dbReference type="PDBsum" id="8H9G"/>
<dbReference type="PDBsum" id="8H9K"/>
<dbReference type="PDBsum" id="8H9N"/>
<dbReference type="PDBsum" id="8H9R"/>
<dbReference type="PDBsum" id="8H9S"/>
<dbReference type="PDBsum" id="8H9T"/>
<dbReference type="PDBsum" id="8H9U"/>
<dbReference type="PDBsum" id="8H9V"/>
<dbReference type="PDBsum" id="8KI3"/>
<dbReference type="EMDB" id="EMD-34566"/>
<dbReference type="EMDB" id="EMD-34570"/>
<dbReference type="EMDB" id="EMD-34574"/>
<dbReference type="EMDB" id="EMD-34578"/>
<dbReference type="EMDB" id="EMD-34580"/>
<dbReference type="EMDB" id="EMD-34581"/>
<dbReference type="EMDB" id="EMD-34582"/>
<dbReference type="EMDB" id="EMD-34583"/>
<dbReference type="EMDB" id="EMD-37251"/>
<dbReference type="SMR" id="P18859"/>
<dbReference type="BioGRID" id="107006">
    <property type="interactions" value="215"/>
</dbReference>
<dbReference type="ComplexPortal" id="CPX-6151">
    <property type="entry name" value="Mitochondrial proton-transporting ATP synthase complex"/>
</dbReference>
<dbReference type="CORUM" id="P18859"/>
<dbReference type="FunCoup" id="P18859">
    <property type="interactions" value="1347"/>
</dbReference>
<dbReference type="IntAct" id="P18859">
    <property type="interactions" value="138"/>
</dbReference>
<dbReference type="MINT" id="P18859"/>
<dbReference type="STRING" id="9606.ENSP00000389649"/>
<dbReference type="TCDB" id="3.A.2.1.15">
    <property type="family name" value="the h+- or na+-translocating f-type, v-type and a-type atpase (f-atpase) superfamily"/>
</dbReference>
<dbReference type="iPTMnet" id="P18859"/>
<dbReference type="PhosphoSitePlus" id="P18859"/>
<dbReference type="SwissPalm" id="P18859"/>
<dbReference type="BioMuta" id="ATP5J"/>
<dbReference type="DMDM" id="114688"/>
<dbReference type="jPOST" id="P18859"/>
<dbReference type="MassIVE" id="P18859"/>
<dbReference type="PaxDb" id="9606-ENSP00000389649"/>
<dbReference type="PeptideAtlas" id="P18859"/>
<dbReference type="ProteomicsDB" id="53618">
    <molecule id="P18859-1"/>
</dbReference>
<dbReference type="Pumba" id="P18859"/>
<dbReference type="TopDownProteomics" id="P18859-1">
    <molecule id="P18859-1"/>
</dbReference>
<dbReference type="Antibodypedia" id="22308">
    <property type="antibodies" value="211 antibodies from 29 providers"/>
</dbReference>
<dbReference type="DNASU" id="522"/>
<dbReference type="Ensembl" id="ENST00000284971.8">
    <molecule id="P18859-1"/>
    <property type="protein sequence ID" value="ENSP00000284971.3"/>
    <property type="gene ID" value="ENSG00000154723.13"/>
</dbReference>
<dbReference type="Ensembl" id="ENST00000400087.7">
    <molecule id="P18859-1"/>
    <property type="protein sequence ID" value="ENSP00000382959.3"/>
    <property type="gene ID" value="ENSG00000154723.13"/>
</dbReference>
<dbReference type="Ensembl" id="ENST00000400090.7">
    <molecule id="P18859-1"/>
    <property type="protein sequence ID" value="ENSP00000382962.3"/>
    <property type="gene ID" value="ENSG00000154723.13"/>
</dbReference>
<dbReference type="Ensembl" id="ENST00000400093.3">
    <molecule id="P18859-1"/>
    <property type="protein sequence ID" value="ENSP00000382965.3"/>
    <property type="gene ID" value="ENSG00000154723.13"/>
</dbReference>
<dbReference type="Ensembl" id="ENST00000400094.5">
    <molecule id="P18859-1"/>
    <property type="protein sequence ID" value="ENSP00000382966.1"/>
    <property type="gene ID" value="ENSG00000154723.13"/>
</dbReference>
<dbReference type="Ensembl" id="ENST00000457143.6">
    <molecule id="P18859-2"/>
    <property type="protein sequence ID" value="ENSP00000389649.2"/>
    <property type="gene ID" value="ENSG00000154723.13"/>
</dbReference>
<dbReference type="GeneID" id="522"/>
<dbReference type="KEGG" id="hsa:522"/>
<dbReference type="MANE-Select" id="ENST00000284971.8">
    <property type="protein sequence ID" value="ENSP00000284971.3"/>
    <property type="RefSeq nucleotide sequence ID" value="NM_001003703.2"/>
    <property type="RefSeq protein sequence ID" value="NP_001003703.1"/>
</dbReference>
<dbReference type="UCSC" id="uc002ylv.4">
    <molecule id="P18859-1"/>
    <property type="organism name" value="human"/>
</dbReference>
<dbReference type="AGR" id="HGNC:847"/>
<dbReference type="CTD" id="522"/>
<dbReference type="DisGeNET" id="522"/>
<dbReference type="GeneCards" id="ATP5PF"/>
<dbReference type="HGNC" id="HGNC:847">
    <property type="gene designation" value="ATP5PF"/>
</dbReference>
<dbReference type="HPA" id="ENSG00000154723">
    <property type="expression patterns" value="Tissue enhanced (tongue)"/>
</dbReference>
<dbReference type="MalaCards" id="ATP5PF"/>
<dbReference type="MIM" id="603152">
    <property type="type" value="gene"/>
</dbReference>
<dbReference type="neXtProt" id="NX_P18859"/>
<dbReference type="OpenTargets" id="ENSG00000154723"/>
<dbReference type="PharmGKB" id="PA25137"/>
<dbReference type="VEuPathDB" id="HostDB:ENSG00000154723"/>
<dbReference type="eggNOG" id="KOG4634">
    <property type="taxonomic scope" value="Eukaryota"/>
</dbReference>
<dbReference type="GeneTree" id="ENSGT00390000008902"/>
<dbReference type="HOGENOM" id="CLU_145649_1_0_1"/>
<dbReference type="InParanoid" id="P18859"/>
<dbReference type="OMA" id="RRNIGMS"/>
<dbReference type="OrthoDB" id="8902296at2759"/>
<dbReference type="PAN-GO" id="P18859">
    <property type="GO annotations" value="1 GO annotation based on evolutionary models"/>
</dbReference>
<dbReference type="PhylomeDB" id="P18859"/>
<dbReference type="TreeFam" id="TF318998"/>
<dbReference type="BioCyc" id="MetaCyc:ENSG00000154723-MONOMER"/>
<dbReference type="PathwayCommons" id="P18859"/>
<dbReference type="Reactome" id="R-HSA-163210">
    <property type="pathway name" value="Formation of ATP by chemiosmotic coupling"/>
</dbReference>
<dbReference type="Reactome" id="R-HSA-8949613">
    <property type="pathway name" value="Cristae formation"/>
</dbReference>
<dbReference type="Reactome" id="R-HSA-9837999">
    <property type="pathway name" value="Mitochondrial protein degradation"/>
</dbReference>
<dbReference type="SignaLink" id="P18859"/>
<dbReference type="SIGNOR" id="P18859"/>
<dbReference type="BioGRID-ORCS" id="522">
    <property type="hits" value="212 hits in 1112 CRISPR screens"/>
</dbReference>
<dbReference type="ChiTaRS" id="ATP5J">
    <property type="organism name" value="human"/>
</dbReference>
<dbReference type="GeneWiki" id="ATP5J"/>
<dbReference type="GenomeRNAi" id="522"/>
<dbReference type="Pharos" id="P18859">
    <property type="development level" value="Tbio"/>
</dbReference>
<dbReference type="PRO" id="PR:P18859"/>
<dbReference type="Proteomes" id="UP000005640">
    <property type="component" value="Chromosome 21"/>
</dbReference>
<dbReference type="RNAct" id="P18859">
    <property type="molecule type" value="protein"/>
</dbReference>
<dbReference type="Bgee" id="ENSG00000154723">
    <property type="expression patterns" value="Expressed in left ventricle myocardium and 217 other cell types or tissues"/>
</dbReference>
<dbReference type="ExpressionAtlas" id="P18859">
    <property type="expression patterns" value="baseline and differential"/>
</dbReference>
<dbReference type="GO" id="GO:0005743">
    <property type="term" value="C:mitochondrial inner membrane"/>
    <property type="evidence" value="ECO:0000304"/>
    <property type="project" value="Reactome"/>
</dbReference>
<dbReference type="GO" id="GO:0005739">
    <property type="term" value="C:mitochondrion"/>
    <property type="evidence" value="ECO:0000314"/>
    <property type="project" value="HPA"/>
</dbReference>
<dbReference type="GO" id="GO:0045259">
    <property type="term" value="C:proton-transporting ATP synthase complex"/>
    <property type="evidence" value="ECO:0000314"/>
    <property type="project" value="UniProtKB"/>
</dbReference>
<dbReference type="GO" id="GO:0015078">
    <property type="term" value="F:proton transmembrane transporter activity"/>
    <property type="evidence" value="ECO:0007669"/>
    <property type="project" value="InterPro"/>
</dbReference>
<dbReference type="GO" id="GO:0015986">
    <property type="term" value="P:proton motive force-driven ATP synthesis"/>
    <property type="evidence" value="ECO:0000303"/>
    <property type="project" value="ComplexPortal"/>
</dbReference>
<dbReference type="GO" id="GO:0042776">
    <property type="term" value="P:proton motive force-driven mitochondrial ATP synthesis"/>
    <property type="evidence" value="ECO:0000314"/>
    <property type="project" value="UniProtKB"/>
</dbReference>
<dbReference type="GO" id="GO:0021762">
    <property type="term" value="P:substantia nigra development"/>
    <property type="evidence" value="ECO:0007007"/>
    <property type="project" value="UniProtKB"/>
</dbReference>
<dbReference type="FunFam" id="1.10.246.110:FF:000001">
    <property type="entry name" value="ATP synthase-coupling factor 6, mitochondrial"/>
    <property type="match status" value="1"/>
</dbReference>
<dbReference type="Gene3D" id="1.10.246.110">
    <property type="entry name" value="Mitochondrial ATP synthase-coupling factor 6"/>
    <property type="match status" value="1"/>
</dbReference>
<dbReference type="InterPro" id="IPR008387">
    <property type="entry name" value="ATP_synth_f6_mt"/>
</dbReference>
<dbReference type="InterPro" id="IPR036204">
    <property type="entry name" value="ATP_synth_f6_sf_mt"/>
</dbReference>
<dbReference type="PANTHER" id="PTHR12441">
    <property type="entry name" value="ATP SYNTHASE COUPLING FACTOR 6, MITOCHONDRIAL"/>
    <property type="match status" value="1"/>
</dbReference>
<dbReference type="PANTHER" id="PTHR12441:SF10">
    <property type="entry name" value="ATP SYNTHASE-COUPLING FACTOR 6, MITOCHONDRIAL"/>
    <property type="match status" value="1"/>
</dbReference>
<dbReference type="Pfam" id="PF05511">
    <property type="entry name" value="ATP-synt_F6"/>
    <property type="match status" value="1"/>
</dbReference>
<dbReference type="PIRSF" id="PIRSF002455">
    <property type="entry name" value="ATP_synthase_coupling_factor_6"/>
    <property type="match status" value="1"/>
</dbReference>
<dbReference type="SUPFAM" id="SSF111357">
    <property type="entry name" value="Mitochondrial ATP synthase coupling factor 6"/>
    <property type="match status" value="1"/>
</dbReference>
<protein>
    <recommendedName>
        <fullName evidence="8">ATP synthase peripheral stalk subunit F6, mitochondrial</fullName>
        <shortName>ATPase subunit F6</shortName>
    </recommendedName>
    <alternativeName>
        <fullName evidence="8">ATP synthase peripheral stalk subunit F6</fullName>
    </alternativeName>
</protein>
<organism>
    <name type="scientific">Homo sapiens</name>
    <name type="common">Human</name>
    <dbReference type="NCBI Taxonomy" id="9606"/>
    <lineage>
        <taxon>Eukaryota</taxon>
        <taxon>Metazoa</taxon>
        <taxon>Chordata</taxon>
        <taxon>Craniata</taxon>
        <taxon>Vertebrata</taxon>
        <taxon>Euteleostomi</taxon>
        <taxon>Mammalia</taxon>
        <taxon>Eutheria</taxon>
        <taxon>Euarchontoglires</taxon>
        <taxon>Primates</taxon>
        <taxon>Haplorrhini</taxon>
        <taxon>Catarrhini</taxon>
        <taxon>Hominidae</taxon>
        <taxon>Homo</taxon>
    </lineage>
</organism>
<name>ATP5J_HUMAN</name>
<proteinExistence type="evidence at protein level"/>
<feature type="transit peptide" description="Mitochondrion" evidence="4">
    <location>
        <begin position="1"/>
        <end position="32"/>
    </location>
</feature>
<feature type="chain" id="PRO_0000002527" description="ATP synthase peripheral stalk subunit F6, mitochondrial">
    <location>
        <begin position="33"/>
        <end position="108"/>
    </location>
</feature>
<feature type="modified residue" description="N6-acetyllysine" evidence="19">
    <location>
        <position position="41"/>
    </location>
</feature>
<feature type="modified residue" description="N6-acetyllysine" evidence="19">
    <location>
        <position position="46"/>
    </location>
</feature>
<feature type="modified residue" description="Phosphoserine" evidence="20">
    <location>
        <position position="65"/>
    </location>
</feature>
<feature type="modified residue" description="N6-acetyllysine" evidence="3">
    <location>
        <position position="79"/>
    </location>
</feature>
<feature type="modified residue" description="N6-acetyllysine; alternate" evidence="3">
    <location>
        <position position="94"/>
    </location>
</feature>
<feature type="modified residue" description="N6-succinyllysine; alternate" evidence="3">
    <location>
        <position position="94"/>
    </location>
</feature>
<feature type="modified residue" description="N6-acetyllysine; alternate" evidence="19">
    <location>
        <position position="99"/>
    </location>
</feature>
<feature type="modified residue" description="N6-succinyllysine; alternate" evidence="3">
    <location>
        <position position="99"/>
    </location>
</feature>
<feature type="modified residue" description="N6-acetyllysine" evidence="19">
    <location>
        <position position="105"/>
    </location>
</feature>
<feature type="splice variant" id="VSP_046187" description="In isoform 2." evidence="7">
    <original>M</original>
    <variation>MHCDGGISM</variation>
    <location>
        <position position="1"/>
    </location>
</feature>
<feature type="sequence variant" id="VAR_083477" evidence="5">
    <original>I</original>
    <variation>T</variation>
    <location>
        <position position="39"/>
    </location>
</feature>
<feature type="sequence conflict" description="In Ref. 2; AAA58630." evidence="8" ref="2">
    <original>Q</original>
    <variation>H</variation>
    <location>
        <position position="68"/>
    </location>
</feature>
<feature type="helix" evidence="21">
    <location>
        <begin position="41"/>
        <end position="54"/>
    </location>
</feature>
<feature type="strand" evidence="21">
    <location>
        <begin position="60"/>
        <end position="63"/>
    </location>
</feature>
<feature type="helix" evidence="21">
    <location>
        <begin position="68"/>
        <end position="82"/>
    </location>
</feature>
<reference key="1">
    <citation type="journal article" date="1991" name="Gene">
        <title>Human mitochondrial ATP synthase: cloning cDNA for the nuclear-encoded precursor of coupling factor 6.</title>
        <authorList>
            <person name="Javed A.A."/>
            <person name="Ogata K."/>
            <person name="Sanadi D.R."/>
        </authorList>
    </citation>
    <scope>NUCLEOTIDE SEQUENCE [MRNA] (ISOFORM 1)</scope>
</reference>
<reference key="2">
    <citation type="journal article" date="1991" name="Biochem. Biophys. Res. Commun.">
        <title>Molecular cloning of cDNA for the import precursor of human coupling factor 6 of H(+)-ATP synthase in mitochondria.</title>
        <authorList>
            <person name="Higuti T."/>
            <person name="Tsurumi C."/>
            <person name="Kawamura Y."/>
            <person name="Tsujita H."/>
            <person name="Osaka F."/>
            <person name="Yoshihara Y."/>
            <person name="Tani I."/>
            <person name="Tanaka K."/>
            <person name="Ichihara A."/>
        </authorList>
    </citation>
    <scope>NUCLEOTIDE SEQUENCE [MRNA] (ISOFORM 1)</scope>
</reference>
<reference key="3">
    <citation type="journal article" date="2001" name="Genome Res.">
        <title>Towards a catalog of human genes and proteins: sequencing and analysis of 500 novel complete protein coding human cDNAs.</title>
        <authorList>
            <person name="Wiemann S."/>
            <person name="Weil B."/>
            <person name="Wellenreuther R."/>
            <person name="Gassenhuber J."/>
            <person name="Glassl S."/>
            <person name="Ansorge W."/>
            <person name="Boecher M."/>
            <person name="Bloecker H."/>
            <person name="Bauersachs S."/>
            <person name="Blum H."/>
            <person name="Lauber J."/>
            <person name="Duesterhoeft A."/>
            <person name="Beyer A."/>
            <person name="Koehrer K."/>
            <person name="Strack N."/>
            <person name="Mewes H.-W."/>
            <person name="Ottenwaelder B."/>
            <person name="Obermaier B."/>
            <person name="Tampe J."/>
            <person name="Heubner D."/>
            <person name="Wambutt R."/>
            <person name="Korn B."/>
            <person name="Klein M."/>
            <person name="Poustka A."/>
        </authorList>
    </citation>
    <scope>NUCLEOTIDE SEQUENCE [LARGE SCALE MRNA] (ISOFORM 1)</scope>
    <source>
        <tissue>Kidney</tissue>
    </source>
</reference>
<reference key="4">
    <citation type="submission" date="2003-05" db="EMBL/GenBank/DDBJ databases">
        <title>Cloning of human full-length CDSs in BD Creator(TM) system donor vector.</title>
        <authorList>
            <person name="Kalnine N."/>
            <person name="Chen X."/>
            <person name="Rolfs A."/>
            <person name="Halleck A."/>
            <person name="Hines L."/>
            <person name="Eisenstein S."/>
            <person name="Koundinya M."/>
            <person name="Raphael J."/>
            <person name="Moreira D."/>
            <person name="Kelley T."/>
            <person name="LaBaer J."/>
            <person name="Lin Y."/>
            <person name="Phelan M."/>
            <person name="Farmer A."/>
        </authorList>
    </citation>
    <scope>NUCLEOTIDE SEQUENCE [LARGE SCALE MRNA] (ISOFORM 1)</scope>
</reference>
<reference key="5">
    <citation type="journal article" date="2006" name="DNA Res.">
        <title>Identification of genes related to Parkinson's disease using expressed sequence tags.</title>
        <authorList>
            <person name="Kim J.M."/>
            <person name="Lee K.H."/>
            <person name="Jeon Y.J."/>
            <person name="Oh J.H."/>
            <person name="Jeong S.Y."/>
            <person name="Song I.S."/>
            <person name="Kim J.M."/>
            <person name="Lee D.S."/>
            <person name="Kim N.S."/>
        </authorList>
    </citation>
    <scope>NUCLEOTIDE SEQUENCE [LARGE SCALE MRNA] (ISOFORM 2)</scope>
</reference>
<reference key="6">
    <citation type="journal article" date="2000" name="Nature">
        <title>The DNA sequence of human chromosome 21.</title>
        <authorList>
            <person name="Hattori M."/>
            <person name="Fujiyama A."/>
            <person name="Taylor T.D."/>
            <person name="Watanabe H."/>
            <person name="Yada T."/>
            <person name="Park H.-S."/>
            <person name="Toyoda A."/>
            <person name="Ishii K."/>
            <person name="Totoki Y."/>
            <person name="Choi D.-K."/>
            <person name="Groner Y."/>
            <person name="Soeda E."/>
            <person name="Ohki M."/>
            <person name="Takagi T."/>
            <person name="Sakaki Y."/>
            <person name="Taudien S."/>
            <person name="Blechschmidt K."/>
            <person name="Polley A."/>
            <person name="Menzel U."/>
            <person name="Delabar J."/>
            <person name="Kumpf K."/>
            <person name="Lehmann R."/>
            <person name="Patterson D."/>
            <person name="Reichwald K."/>
            <person name="Rump A."/>
            <person name="Schillhabel M."/>
            <person name="Schudy A."/>
            <person name="Zimmermann W."/>
            <person name="Rosenthal A."/>
            <person name="Kudoh J."/>
            <person name="Shibuya K."/>
            <person name="Kawasaki K."/>
            <person name="Asakawa S."/>
            <person name="Shintani A."/>
            <person name="Sasaki T."/>
            <person name="Nagamine K."/>
            <person name="Mitsuyama S."/>
            <person name="Antonarakis S.E."/>
            <person name="Minoshima S."/>
            <person name="Shimizu N."/>
            <person name="Nordsiek G."/>
            <person name="Hornischer K."/>
            <person name="Brandt P."/>
            <person name="Scharfe M."/>
            <person name="Schoen O."/>
            <person name="Desario A."/>
            <person name="Reichelt J."/>
            <person name="Kauer G."/>
            <person name="Bloecker H."/>
            <person name="Ramser J."/>
            <person name="Beck A."/>
            <person name="Klages S."/>
            <person name="Hennig S."/>
            <person name="Riesselmann L."/>
            <person name="Dagand E."/>
            <person name="Wehrmeyer S."/>
            <person name="Borzym K."/>
            <person name="Gardiner K."/>
            <person name="Nizetic D."/>
            <person name="Francis F."/>
            <person name="Lehrach H."/>
            <person name="Reinhardt R."/>
            <person name="Yaspo M.-L."/>
        </authorList>
    </citation>
    <scope>NUCLEOTIDE SEQUENCE [LARGE SCALE GENOMIC DNA]</scope>
</reference>
<reference key="7">
    <citation type="journal article" date="2004" name="Genome Res.">
        <title>The status, quality, and expansion of the NIH full-length cDNA project: the Mammalian Gene Collection (MGC).</title>
        <authorList>
            <consortium name="The MGC Project Team"/>
        </authorList>
    </citation>
    <scope>NUCLEOTIDE SEQUENCE [LARGE SCALE MRNA] (ISOFORM 1)</scope>
    <source>
        <tissue>Eye</tissue>
    </source>
</reference>
<reference key="8">
    <citation type="journal article" date="1992" name="Electrophoresis">
        <title>Human liver protein map: a reference database established by microsequencing and gel comparison.</title>
        <authorList>
            <person name="Hochstrasser D.F."/>
            <person name="Frutiger S."/>
            <person name="Paquet N."/>
            <person name="Bairoch A."/>
            <person name="Ravier F."/>
            <person name="Pasquali C."/>
            <person name="Sanchez J.-C."/>
            <person name="Tissot J.-D."/>
            <person name="Bjellqvist B."/>
            <person name="Vargas R."/>
            <person name="Appel R.D."/>
            <person name="Hughes G.J."/>
        </authorList>
    </citation>
    <scope>PROTEIN SEQUENCE OF 33-43</scope>
    <source>
        <tissue>Liver</tissue>
    </source>
</reference>
<reference key="9">
    <citation type="journal article" date="2009" name="Science">
        <title>Lysine acetylation targets protein complexes and co-regulates major cellular functions.</title>
        <authorList>
            <person name="Choudhary C."/>
            <person name="Kumar C."/>
            <person name="Gnad F."/>
            <person name="Nielsen M.L."/>
            <person name="Rehman M."/>
            <person name="Walther T.C."/>
            <person name="Olsen J.V."/>
            <person name="Mann M."/>
        </authorList>
    </citation>
    <scope>ACETYLATION [LARGE SCALE ANALYSIS] AT LYS-41; LYS-46; LYS-99 AND LYS-105</scope>
    <scope>IDENTIFICATION BY MASS SPECTROMETRY [LARGE SCALE ANALYSIS]</scope>
</reference>
<reference key="10">
    <citation type="journal article" date="2011" name="BMC Syst. Biol.">
        <title>Initial characterization of the human central proteome.</title>
        <authorList>
            <person name="Burkard T.R."/>
            <person name="Planyavsky M."/>
            <person name="Kaupe I."/>
            <person name="Breitwieser F.P."/>
            <person name="Buerckstuemmer T."/>
            <person name="Bennett K.L."/>
            <person name="Superti-Furga G."/>
            <person name="Colinge J."/>
        </authorList>
    </citation>
    <scope>IDENTIFICATION BY MASS SPECTROMETRY [LARGE SCALE ANALYSIS]</scope>
</reference>
<reference key="11">
    <citation type="journal article" date="2013" name="J. Proteome Res.">
        <title>Toward a comprehensive characterization of a human cancer cell phosphoproteome.</title>
        <authorList>
            <person name="Zhou H."/>
            <person name="Di Palma S."/>
            <person name="Preisinger C."/>
            <person name="Peng M."/>
            <person name="Polat A.N."/>
            <person name="Heck A.J."/>
            <person name="Mohammed S."/>
        </authorList>
    </citation>
    <scope>PHOSPHORYLATION [LARGE SCALE ANALYSIS] AT SER-65</scope>
    <scope>IDENTIFICATION BY MASS SPECTROMETRY [LARGE SCALE ANALYSIS]</scope>
    <source>
        <tissue>Cervix carcinoma</tissue>
        <tissue>Erythroleukemia</tissue>
    </source>
</reference>
<reference key="12">
    <citation type="journal article" date="2014" name="J. Proteomics">
        <title>An enzyme assisted RP-RPLC approach for in-depth analysis of human liver phosphoproteome.</title>
        <authorList>
            <person name="Bian Y."/>
            <person name="Song C."/>
            <person name="Cheng K."/>
            <person name="Dong M."/>
            <person name="Wang F."/>
            <person name="Huang J."/>
            <person name="Sun D."/>
            <person name="Wang L."/>
            <person name="Ye M."/>
            <person name="Zou H."/>
        </authorList>
    </citation>
    <scope>IDENTIFICATION BY MASS SPECTROMETRY [LARGE SCALE ANALYSIS]</scope>
    <source>
        <tissue>Liver</tissue>
    </source>
</reference>
<reference key="13">
    <citation type="journal article" date="2015" name="Proteomics">
        <title>N-terminome analysis of the human mitochondrial proteome.</title>
        <authorList>
            <person name="Vaca Jacome A.S."/>
            <person name="Rabilloud T."/>
            <person name="Schaeffer-Reiss C."/>
            <person name="Rompais M."/>
            <person name="Ayoub D."/>
            <person name="Lane L."/>
            <person name="Bairoch A."/>
            <person name="Van Dorsselaer A."/>
            <person name="Carapito C."/>
        </authorList>
    </citation>
    <scope>IDENTIFICATION BY MASS SPECTROMETRY [LARGE SCALE ANALYSIS]</scope>
</reference>
<reference evidence="11 12 13 14 15 16 17 18" key="14">
    <citation type="journal article" date="2023" name="Mol. Cell">
        <title>Structure of the human ATP synthase.</title>
        <authorList>
            <person name="Lai Y."/>
            <person name="Zhang Y."/>
            <person name="Zhou S."/>
            <person name="Xu J."/>
            <person name="Du Z."/>
            <person name="Feng Z."/>
            <person name="Yu L."/>
            <person name="Zhao Z."/>
            <person name="Wang W."/>
            <person name="Tang Y."/>
            <person name="Yang X."/>
            <person name="Guddat L.W."/>
            <person name="Liu F."/>
            <person name="Gao Y."/>
            <person name="Rao Z."/>
            <person name="Gong H."/>
        </authorList>
    </citation>
    <scope>STRUCTURE BY ELECTRON MICROSCOPY (2.53 ANGSTROMS)</scope>
    <scope>IDENTIFICATION IN THE ATP SYNTHASE COMPLEX</scope>
    <scope>FUNCTION</scope>
    <scope>SUBUNIT</scope>
</reference>
<reference key="15">
    <citation type="journal article" date="2018" name="Am. J. Hum. Genet.">
        <title>De Novo Truncating Mutations in WASF1 Cause Intellectual Disability with Seizures.</title>
        <authorList>
            <consortium name="NIHR BioResource"/>
            <consortium name="Care4Rare Canada Consortium"/>
            <person name="Ito Y."/>
            <person name="Carss K.J."/>
            <person name="Duarte S.T."/>
            <person name="Hartley T."/>
            <person name="Keren B."/>
            <person name="Kurian M.A."/>
            <person name="Marey I."/>
            <person name="Charles P."/>
            <person name="Mendonca C."/>
            <person name="Nava C."/>
            <person name="Pfundt R."/>
            <person name="Sanchis-Juan A."/>
            <person name="van Bokhoven H."/>
            <person name="van Essen A."/>
            <person name="van Ravenswaaij-Arts C."/>
            <person name="Boycott K.M."/>
            <person name="Kernohan K.D."/>
            <person name="Dyack S."/>
            <person name="Raymond F.L."/>
        </authorList>
    </citation>
    <scope>VARIANT THR-39</scope>
</reference>
<gene>
    <name evidence="10" type="primary">ATP5PF</name>
    <name type="synonym">ATP5A</name>
    <name type="synonym">ATP5J</name>
    <name type="synonym">ATPM</name>
</gene>
<sequence length="108" mass="12588">MILQRLFRFSSVIRSAVSVHLRRNIGVTAVAFNKELDPIQKLFVDKIREYKSKRQTSGGPVDASSEYQQELERELFKLKQMFGNADMNTFPTFKFEDPKFEVIEKPQA</sequence>
<keyword id="KW-0002">3D-structure</keyword>
<keyword id="KW-0007">Acetylation</keyword>
<keyword id="KW-0025">Alternative splicing</keyword>
<keyword id="KW-0138">CF(0)</keyword>
<keyword id="KW-0903">Direct protein sequencing</keyword>
<keyword id="KW-0375">Hydrogen ion transport</keyword>
<keyword id="KW-0406">Ion transport</keyword>
<keyword id="KW-0472">Membrane</keyword>
<keyword id="KW-0496">Mitochondrion</keyword>
<keyword id="KW-0999">Mitochondrion inner membrane</keyword>
<keyword id="KW-0597">Phosphoprotein</keyword>
<keyword id="KW-1267">Proteomics identification</keyword>
<keyword id="KW-1185">Reference proteome</keyword>
<keyword id="KW-0809">Transit peptide</keyword>
<keyword id="KW-0813">Transport</keyword>
<accession>P18859</accession>
<accession>J3KQ83</accession>
<evidence type="ECO:0000250" key="1">
    <source>
        <dbReference type="UniProtKB" id="P02721"/>
    </source>
</evidence>
<evidence type="ECO:0000250" key="2">
    <source>
        <dbReference type="UniProtKB" id="P19483"/>
    </source>
</evidence>
<evidence type="ECO:0000250" key="3">
    <source>
        <dbReference type="UniProtKB" id="P97450"/>
    </source>
</evidence>
<evidence type="ECO:0000269" key="4">
    <source>
    </source>
</evidence>
<evidence type="ECO:0000269" key="5">
    <source>
    </source>
</evidence>
<evidence type="ECO:0000269" key="6">
    <source>
    </source>
</evidence>
<evidence type="ECO:0000303" key="7">
    <source>
    </source>
</evidence>
<evidence type="ECO:0000305" key="8"/>
<evidence type="ECO:0000305" key="9">
    <source>
    </source>
</evidence>
<evidence type="ECO:0000312" key="10">
    <source>
        <dbReference type="HGNC" id="HGNC:847"/>
    </source>
</evidence>
<evidence type="ECO:0007744" key="11">
    <source>
        <dbReference type="PDB" id="8H9G"/>
    </source>
</evidence>
<evidence type="ECO:0007744" key="12">
    <source>
        <dbReference type="PDB" id="8H9K"/>
    </source>
</evidence>
<evidence type="ECO:0007744" key="13">
    <source>
        <dbReference type="PDB" id="8H9N"/>
    </source>
</evidence>
<evidence type="ECO:0007744" key="14">
    <source>
        <dbReference type="PDB" id="8H9R"/>
    </source>
</evidence>
<evidence type="ECO:0007744" key="15">
    <source>
        <dbReference type="PDB" id="8H9S"/>
    </source>
</evidence>
<evidence type="ECO:0007744" key="16">
    <source>
        <dbReference type="PDB" id="8H9T"/>
    </source>
</evidence>
<evidence type="ECO:0007744" key="17">
    <source>
        <dbReference type="PDB" id="8H9U"/>
    </source>
</evidence>
<evidence type="ECO:0007744" key="18">
    <source>
        <dbReference type="PDB" id="8H9V"/>
    </source>
</evidence>
<evidence type="ECO:0007744" key="19">
    <source>
    </source>
</evidence>
<evidence type="ECO:0007744" key="20">
    <source>
    </source>
</evidence>
<evidence type="ECO:0007829" key="21">
    <source>
        <dbReference type="PDB" id="8H9G"/>
    </source>
</evidence>